<proteinExistence type="evidence at protein level"/>
<protein>
    <recommendedName>
        <fullName evidence="6">HTH-type transcriptional regulator MmpR5</fullName>
    </recommendedName>
</protein>
<reference key="1">
    <citation type="journal article" date="1998" name="Nature">
        <title>Deciphering the biology of Mycobacterium tuberculosis from the complete genome sequence.</title>
        <authorList>
            <person name="Cole S.T."/>
            <person name="Brosch R."/>
            <person name="Parkhill J."/>
            <person name="Garnier T."/>
            <person name="Churcher C.M."/>
            <person name="Harris D.E."/>
            <person name="Gordon S.V."/>
            <person name="Eiglmeier K."/>
            <person name="Gas S."/>
            <person name="Barry C.E. III"/>
            <person name="Tekaia F."/>
            <person name="Badcock K."/>
            <person name="Basham D."/>
            <person name="Brown D."/>
            <person name="Chillingworth T."/>
            <person name="Connor R."/>
            <person name="Davies R.M."/>
            <person name="Devlin K."/>
            <person name="Feltwell T."/>
            <person name="Gentles S."/>
            <person name="Hamlin N."/>
            <person name="Holroyd S."/>
            <person name="Hornsby T."/>
            <person name="Jagels K."/>
            <person name="Krogh A."/>
            <person name="McLean J."/>
            <person name="Moule S."/>
            <person name="Murphy L.D."/>
            <person name="Oliver S."/>
            <person name="Osborne J."/>
            <person name="Quail M.A."/>
            <person name="Rajandream M.A."/>
            <person name="Rogers J."/>
            <person name="Rutter S."/>
            <person name="Seeger K."/>
            <person name="Skelton S."/>
            <person name="Squares S."/>
            <person name="Squares R."/>
            <person name="Sulston J.E."/>
            <person name="Taylor K."/>
            <person name="Whitehead S."/>
            <person name="Barrell B.G."/>
        </authorList>
    </citation>
    <scope>NUCLEOTIDE SEQUENCE [LARGE SCALE GENOMIC DNA]</scope>
    <source>
        <strain>ATCC 25618 / H37Rv</strain>
    </source>
</reference>
<reference key="2">
    <citation type="submission" date="2013-11" db="EMBL/GenBank/DDBJ databases">
        <title>The genome sequence of Mycobacterium tuberculosis H37Rv.</title>
        <authorList>
            <consortium name="The Broad Institute Genome Sequencing Platform"/>
            <person name="Galagan J."/>
            <person name="Kreiswirth B."/>
            <person name="Dobos K."/>
            <person name="Fortune S."/>
            <person name="Fitzgerald M."/>
            <person name="Young S.K."/>
            <person name="Zeng Q."/>
            <person name="Gargeya S."/>
            <person name="Abouelleil A."/>
            <person name="Alvarado L."/>
            <person name="Berlin A.M."/>
            <person name="Chapman S.B."/>
            <person name="Gainer-Dewar J."/>
            <person name="Goldberg J."/>
            <person name="Gnerre S."/>
            <person name="Griggs A."/>
            <person name="Gujja S."/>
            <person name="Hansen M."/>
            <person name="Howarth C."/>
            <person name="Imamovic A."/>
            <person name="Larimer J."/>
            <person name="McCowan C."/>
            <person name="Murphy C."/>
            <person name="Pearson M."/>
            <person name="Poon T."/>
            <person name="Priest M."/>
            <person name="Roberts A."/>
            <person name="Saif S."/>
            <person name="Shea T."/>
            <person name="Sykes S."/>
            <person name="Wortman J."/>
            <person name="Nusbaum C."/>
            <person name="Birren B."/>
        </authorList>
    </citation>
    <scope>NUCLEOTIDE SEQUENCE [LARGE SCALE GENOMIC DNA]</scope>
    <source>
        <strain>ATCC 25618 / H37Rv</strain>
    </source>
</reference>
<reference key="3">
    <citation type="submission" date="2014-04" db="EMBL/GenBank/DDBJ databases">
        <title>The genome sequence of Mycobacterium tuberculosis H37Rv.</title>
        <authorList>
            <consortium name="The Broad Institute Genomics Platform"/>
            <consortium name="The Broad Institute Genome Sequencing Center for Infectious Disease"/>
            <person name="Earl A.M."/>
            <person name="Kreiswirth B."/>
            <person name="Gomez J."/>
            <person name="Victor T."/>
            <person name="Desjardins C."/>
            <person name="Abeel T."/>
            <person name="Young S."/>
            <person name="Zeng Q."/>
            <person name="Gargeya S."/>
            <person name="Abouelleil A."/>
            <person name="Alvarado L."/>
            <person name="Chapman S.B."/>
            <person name="Gainer-Dewar J."/>
            <person name="Goldberg J."/>
            <person name="Griggs A."/>
            <person name="Gujja S."/>
            <person name="Hansen M."/>
            <person name="Howarth C."/>
            <person name="Imamovic A."/>
            <person name="Larimer J."/>
            <person name="Murphy C."/>
            <person name="Naylor J."/>
            <person name="Pearson M."/>
            <person name="Poon T.W."/>
            <person name="Priest M."/>
            <person name="Roberts A."/>
            <person name="Saif S."/>
            <person name="Shea T."/>
            <person name="Sykes S."/>
            <person name="Wortman J."/>
            <person name="Nusbaum C."/>
            <person name="Birren B."/>
        </authorList>
    </citation>
    <scope>NUCLEOTIDE SEQUENCE [LARGE SCALE GENOMIC DNA]</scope>
    <source>
        <strain>ATCC 25618 / H37Rv</strain>
    </source>
</reference>
<reference key="4">
    <citation type="journal article" date="2009" name="Tuberculosis">
        <title>Azole resistance in Mycobacterium tuberculosis is mediated by the MmpS5-MmpL5 efflux system.</title>
        <authorList>
            <person name="Milano A."/>
            <person name="Pasca M.R."/>
            <person name="Provvedi R."/>
            <person name="Lucarelli A.P."/>
            <person name="Manina G."/>
            <person name="Ribeiro A.L."/>
            <person name="Manganelli R."/>
            <person name="Riccardi G."/>
        </authorList>
    </citation>
    <scope>FUNCTION</scope>
    <scope>INDUCTION</scope>
    <scope>DISRUPTION PHENOTYPE</scope>
    <source>
        <strain>H37Rv</strain>
    </source>
</reference>
<reference key="5">
    <citation type="journal article" date="2011" name="Mol. Cell. Proteomics">
        <title>Proteogenomic analysis of Mycobacterium tuberculosis by high resolution mass spectrometry.</title>
        <authorList>
            <person name="Kelkar D.S."/>
            <person name="Kumar D."/>
            <person name="Kumar P."/>
            <person name="Balakrishnan L."/>
            <person name="Muthusamy B."/>
            <person name="Yadav A.K."/>
            <person name="Shrivastava P."/>
            <person name="Marimuthu A."/>
            <person name="Anand S."/>
            <person name="Sundaram H."/>
            <person name="Kingsbury R."/>
            <person name="Harsha H.C."/>
            <person name="Nair B."/>
            <person name="Prasad T.S."/>
            <person name="Chauhan D.S."/>
            <person name="Katoch K."/>
            <person name="Katoch V.M."/>
            <person name="Kumar P."/>
            <person name="Chaerkady R."/>
            <person name="Ramachandran S."/>
            <person name="Dash D."/>
            <person name="Pandey A."/>
        </authorList>
    </citation>
    <scope>IDENTIFICATION BY MASS SPECTROMETRY [LARGE SCALE ANALYSIS]</scope>
    <source>
        <strain>ATCC 25618 / H37Rv</strain>
    </source>
</reference>
<reference key="6">
    <citation type="journal article" date="2014" name="Antimicrob. Agents Chemother.">
        <title>Cross-resistance between clofazimine and bedaquiline through upregulation of MmpL5 in Mycobacterium tuberculosis.</title>
        <authorList>
            <person name="Hartkoorn R.C."/>
            <person name="Uplekar S."/>
            <person name="Cole S.T."/>
        </authorList>
    </citation>
    <scope>FUNCTION</scope>
    <scope>INDUCTION</scope>
    <scope>DISRUPTION PHENOTYPE</scope>
    <scope>GENE NAME</scope>
    <scope>VARIANT CFZ-R1 ARG-63</scope>
    <source>
        <strain>H37Rv</strain>
    </source>
</reference>
<reference key="7">
    <citation type="journal article" date="2014" name="PLoS ONE">
        <title>Acquired resistance of Mycobacterium tuberculosis to bedaquiline.</title>
        <authorList>
            <person name="Andries K."/>
            <person name="Villellas C."/>
            <person name="Coeck N."/>
            <person name="Thys K."/>
            <person name="Gevers T."/>
            <person name="Vranckx L."/>
            <person name="Lounis N."/>
            <person name="de Jong B.C."/>
            <person name="Koul A."/>
        </authorList>
    </citation>
    <scope>DISRUPTION PHENOTYPE</scope>
    <source>
        <strain>H37Rv</strain>
    </source>
</reference>
<reference key="8">
    <citation type="journal article" date="2014" name="J. Biol. Chem.">
        <title>Crystal structure of the transcriptional regulator Rv0678 of Mycobacterium tuberculosis.</title>
        <authorList>
            <person name="Radhakrishnan A."/>
            <person name="Kumar N."/>
            <person name="Wright C.C."/>
            <person name="Chou T.H."/>
            <person name="Tringides M.L."/>
            <person name="Bolla J.R."/>
            <person name="Lei H.T."/>
            <person name="Rajashankar K.R."/>
            <person name="Su C.C."/>
            <person name="Purdy G.E."/>
            <person name="Yu E.W."/>
        </authorList>
    </citation>
    <scope>X-RAY CRYSTALLOGRAPHY (1.64 ANGSTROMS) OF 2-165</scope>
    <scope>FUNCTION</scope>
    <scope>DNA-BINDING</scope>
    <scope>SUBUNIT</scope>
    <scope>MUTAGENESIS OF ASP-88 AND ARG-90</scope>
    <source>
        <strain>H37Rv</strain>
    </source>
</reference>
<organism>
    <name type="scientific">Mycobacterium tuberculosis (strain ATCC 25618 / H37Rv)</name>
    <dbReference type="NCBI Taxonomy" id="83332"/>
    <lineage>
        <taxon>Bacteria</taxon>
        <taxon>Bacillati</taxon>
        <taxon>Actinomycetota</taxon>
        <taxon>Actinomycetes</taxon>
        <taxon>Mycobacteriales</taxon>
        <taxon>Mycobacteriaceae</taxon>
        <taxon>Mycobacterium</taxon>
        <taxon>Mycobacterium tuberculosis complex</taxon>
    </lineage>
</organism>
<keyword id="KW-0002">3D-structure</keyword>
<keyword id="KW-0238">DNA-binding</keyword>
<keyword id="KW-1185">Reference proteome</keyword>
<keyword id="KW-0678">Repressor</keyword>
<keyword id="KW-0804">Transcription</keyword>
<keyword id="KW-0805">Transcription regulation</keyword>
<sequence>MSVNDGVDQMGAEPDIMEFVEQMGGYFESRSLTRLAGRLLGWLLVCDPERQSSEELATALAASSGGISTNARMLIQFGFIERLAVAGDRRTYFRLRPNAFAAGERERIRAMAELQDLADVGLRALGDAPPQRSRRLREMRDLLAYMENVVSDALGRYSQRTGEDD</sequence>
<comment type="function">
    <text evidence="1 2 3">Controls the expression level of the Mmps2-MmpL2, MmpS4-MmpL4, and MmpS5-MmpL5 transport systems. Also controls its own expression. Acts by binding directly to the promoter regions.</text>
</comment>
<comment type="subunit">
    <text evidence="3">Homodimer.</text>
</comment>
<comment type="induction">
    <text evidence="1 2">Negatively autoregulated.</text>
</comment>
<comment type="disruption phenotype">
    <text evidence="1 2 4">Mutations or insertions/deletions that inactivate MmpR5, or decrease its activity, lead to increased levels of MmpL5 and MmpS5, and to non-target based resistance to azoles, clofazimine and bedaquiline.</text>
</comment>
<dbReference type="EMBL" id="CP003248">
    <property type="protein sequence ID" value="AFN48550.1"/>
    <property type="molecule type" value="Genomic_DNA"/>
</dbReference>
<dbReference type="EMBL" id="AL123456">
    <property type="protein sequence ID" value="CCP43421.1"/>
    <property type="molecule type" value="Genomic_DNA"/>
</dbReference>
<dbReference type="EMBL" id="JLDD01000006">
    <property type="protein sequence ID" value="KBJ39304.1"/>
    <property type="molecule type" value="Genomic_DNA"/>
</dbReference>
<dbReference type="RefSeq" id="NP_215192.1">
    <property type="nucleotide sequence ID" value="NC_000962.3"/>
</dbReference>
<dbReference type="RefSeq" id="WP_003403442.1">
    <property type="nucleotide sequence ID" value="NZ_NVQJ01000007.1"/>
</dbReference>
<dbReference type="PDB" id="4NB5">
    <property type="method" value="X-ray"/>
    <property type="resolution" value="1.64 A"/>
    <property type="chains" value="A/B/C/D=2-165"/>
</dbReference>
<dbReference type="PDBsum" id="4NB5"/>
<dbReference type="SMR" id="I6Y8F7"/>
<dbReference type="STRING" id="83332.Rv0678"/>
<dbReference type="PaxDb" id="83332-Rv0678"/>
<dbReference type="DNASU" id="888235"/>
<dbReference type="GeneID" id="45424640"/>
<dbReference type="GeneID" id="888235"/>
<dbReference type="KEGG" id="mtu:Rv0678"/>
<dbReference type="KEGG" id="mtv:RVBD_0678"/>
<dbReference type="PATRIC" id="fig|83332.111.peg.752"/>
<dbReference type="TubercuList" id="Rv0678"/>
<dbReference type="eggNOG" id="COG1510">
    <property type="taxonomic scope" value="Bacteria"/>
</dbReference>
<dbReference type="HOGENOM" id="CLU_120349_2_1_11"/>
<dbReference type="InParanoid" id="I6Y8F7"/>
<dbReference type="OrthoDB" id="67158at2"/>
<dbReference type="PhylomeDB" id="I6Y8F7"/>
<dbReference type="EvolutionaryTrace" id="I6Y8F7"/>
<dbReference type="Proteomes" id="UP000001584">
    <property type="component" value="Chromosome"/>
</dbReference>
<dbReference type="GO" id="GO:0003677">
    <property type="term" value="F:DNA binding"/>
    <property type="evidence" value="ECO:0007669"/>
    <property type="project" value="UniProtKB-KW"/>
</dbReference>
<dbReference type="FunFam" id="1.10.10.10:FF:000634">
    <property type="entry name" value="HTH-type transcriptional regulator MmpR5"/>
    <property type="match status" value="1"/>
</dbReference>
<dbReference type="Gene3D" id="1.10.287.160">
    <property type="entry name" value="HR1 repeat"/>
    <property type="match status" value="1"/>
</dbReference>
<dbReference type="Gene3D" id="1.10.10.10">
    <property type="entry name" value="Winged helix-like DNA-binding domain superfamily/Winged helix DNA-binding domain"/>
    <property type="match status" value="1"/>
</dbReference>
<dbReference type="InterPro" id="IPR052362">
    <property type="entry name" value="HTH-GbsR_regulator"/>
</dbReference>
<dbReference type="InterPro" id="IPR036388">
    <property type="entry name" value="WH-like_DNA-bd_sf"/>
</dbReference>
<dbReference type="InterPro" id="IPR036390">
    <property type="entry name" value="WH_DNA-bd_sf"/>
</dbReference>
<dbReference type="PANTHER" id="PTHR38465">
    <property type="entry name" value="HTH-TYPE TRANSCRIPTIONAL REGULATOR MJ1563-RELATED"/>
    <property type="match status" value="1"/>
</dbReference>
<dbReference type="PANTHER" id="PTHR38465:SF2">
    <property type="entry name" value="HTH-TYPE TRANSCRIPTIONAL REGULATOR MMPR5"/>
    <property type="match status" value="1"/>
</dbReference>
<dbReference type="SUPFAM" id="SSF46785">
    <property type="entry name" value="Winged helix' DNA-binding domain"/>
    <property type="match status" value="1"/>
</dbReference>
<gene>
    <name evidence="5" type="primary">mmpR5</name>
    <name evidence="8" type="ordered locus">Rv0678</name>
    <name evidence="7" type="ordered locus">RVBD_0678</name>
    <name evidence="9" type="ORF">P425_00707</name>
</gene>
<feature type="chain" id="PRO_0000432768" description="HTH-type transcriptional regulator MmpR5">
    <location>
        <begin position="1"/>
        <end position="165"/>
    </location>
</feature>
<feature type="domain" description="HTH marR-type" evidence="6">
    <location>
        <begin position="1"/>
        <end position="151"/>
    </location>
</feature>
<feature type="DNA-binding region" description="H-T-H motif" evidence="6">
    <location>
        <begin position="53"/>
        <end position="76"/>
    </location>
</feature>
<feature type="sequence variant" description="In CFZ-R1; leads to increased expression of mmpL5 and partial resistance to both clofazimine and bedaquiline." evidence="2">
    <original>S</original>
    <variation>R</variation>
    <location>
        <position position="63"/>
    </location>
</feature>
<feature type="mutagenesis site" description="Decreases DNA binding." evidence="3">
    <original>D</original>
    <variation>A</variation>
    <location>
        <position position="88"/>
    </location>
</feature>
<feature type="mutagenesis site" description="Decreases DNA binding." evidence="3">
    <original>R</original>
    <variation>A</variation>
    <location>
        <position position="90"/>
    </location>
</feature>
<feature type="helix" evidence="10">
    <location>
        <begin position="16"/>
        <end position="29"/>
    </location>
</feature>
<feature type="helix" evidence="10">
    <location>
        <begin position="34"/>
        <end position="45"/>
    </location>
</feature>
<feature type="strand" evidence="10">
    <location>
        <begin position="47"/>
        <end position="49"/>
    </location>
</feature>
<feature type="helix" evidence="10">
    <location>
        <begin position="53"/>
        <end position="60"/>
    </location>
</feature>
<feature type="helix" evidence="10">
    <location>
        <begin position="64"/>
        <end position="76"/>
    </location>
</feature>
<feature type="strand" evidence="10">
    <location>
        <begin position="79"/>
        <end position="83"/>
    </location>
</feature>
<feature type="strand" evidence="10">
    <location>
        <begin position="92"/>
        <end position="95"/>
    </location>
</feature>
<feature type="helix" evidence="10">
    <location>
        <begin position="99"/>
        <end position="124"/>
    </location>
</feature>
<feature type="turn" evidence="10">
    <location>
        <begin position="125"/>
        <end position="127"/>
    </location>
</feature>
<feature type="helix" evidence="10">
    <location>
        <begin position="130"/>
        <end position="133"/>
    </location>
</feature>
<feature type="helix" evidence="10">
    <location>
        <begin position="134"/>
        <end position="158"/>
    </location>
</feature>
<name>MMPR5_MYCTU</name>
<evidence type="ECO:0000269" key="1">
    <source>
    </source>
</evidence>
<evidence type="ECO:0000269" key="2">
    <source>
    </source>
</evidence>
<evidence type="ECO:0000269" key="3">
    <source>
    </source>
</evidence>
<evidence type="ECO:0000269" key="4">
    <source>
    </source>
</evidence>
<evidence type="ECO:0000303" key="5">
    <source>
    </source>
</evidence>
<evidence type="ECO:0000305" key="6"/>
<evidence type="ECO:0000312" key="7">
    <source>
        <dbReference type="EMBL" id="AFN48550.1"/>
    </source>
</evidence>
<evidence type="ECO:0000312" key="8">
    <source>
        <dbReference type="EMBL" id="CCP43421.1"/>
    </source>
</evidence>
<evidence type="ECO:0000312" key="9">
    <source>
        <dbReference type="EMBL" id="KBJ39304.1"/>
    </source>
</evidence>
<evidence type="ECO:0007829" key="10">
    <source>
        <dbReference type="PDB" id="4NB5"/>
    </source>
</evidence>
<accession>I6Y8F7</accession>